<accession>P9WIM6</accession>
<accession>L0T785</accession>
<accession>O53426</accession>
<feature type="chain" id="PRO_0000427979" description="Proline-rich antigen homolog">
    <location>
        <begin position="1"/>
        <end position="240"/>
    </location>
</feature>
<feature type="transmembrane region" description="Helical" evidence="2">
    <location>
        <begin position="98"/>
        <end position="118"/>
    </location>
</feature>
<feature type="transmembrane region" description="Helical" evidence="2">
    <location>
        <begin position="142"/>
        <end position="162"/>
    </location>
</feature>
<feature type="transmembrane region" description="Helical" evidence="2">
    <location>
        <begin position="203"/>
        <end position="223"/>
    </location>
</feature>
<feature type="domain" description="RDD" evidence="2">
    <location>
        <begin position="89"/>
        <end position="233"/>
    </location>
</feature>
<feature type="region of interest" description="Disordered" evidence="3">
    <location>
        <begin position="1"/>
        <end position="78"/>
    </location>
</feature>
<feature type="compositionally biased region" description="Pro residues" evidence="3">
    <location>
        <begin position="1"/>
        <end position="31"/>
    </location>
</feature>
<feature type="compositionally biased region" description="Pro residues" evidence="3">
    <location>
        <begin position="38"/>
        <end position="78"/>
    </location>
</feature>
<proteinExistence type="inferred from homology"/>
<sequence>MTEQPPPGGSYPPPPPPPGPSGGHEPPPAAPPGGSGYAPPPPPSSGSGYPPPPPPPGGGAYPPPPPSAGGYAPPPPGPAIRTMPTESYTPWITRVLAAFIDWAPYVVLVGIGWVIMLVTQTSSCVTSISEYDVGQFCVSQPSMIGQLVQWLLSVGGLAYLVWNYGYRQGTIGSSIGKSVLKFKVVSETTGQPIGFGMSVVRQLAHFIDAIICFVGFLFPLWDAKRQTLADKIMTTVCVPI</sequence>
<protein>
    <recommendedName>
        <fullName evidence="1">Proline-rich antigen homolog</fullName>
        <shortName evidence="1">Pra</shortName>
    </recommendedName>
</protein>
<reference key="1">
    <citation type="journal article" date="2002" name="J. Bacteriol.">
        <title>Whole-genome comparison of Mycobacterium tuberculosis clinical and laboratory strains.</title>
        <authorList>
            <person name="Fleischmann R.D."/>
            <person name="Alland D."/>
            <person name="Eisen J.A."/>
            <person name="Carpenter L."/>
            <person name="White O."/>
            <person name="Peterson J.D."/>
            <person name="DeBoy R.T."/>
            <person name="Dodson R.J."/>
            <person name="Gwinn M.L."/>
            <person name="Haft D.H."/>
            <person name="Hickey E.K."/>
            <person name="Kolonay J.F."/>
            <person name="Nelson W.C."/>
            <person name="Umayam L.A."/>
            <person name="Ermolaeva M.D."/>
            <person name="Salzberg S.L."/>
            <person name="Delcher A."/>
            <person name="Utterback T.R."/>
            <person name="Weidman J.F."/>
            <person name="Khouri H.M."/>
            <person name="Gill J."/>
            <person name="Mikula A."/>
            <person name="Bishai W."/>
            <person name="Jacobs W.R. Jr."/>
            <person name="Venter J.C."/>
            <person name="Fraser C.M."/>
        </authorList>
    </citation>
    <scope>NUCLEOTIDE SEQUENCE [LARGE SCALE GENOMIC DNA]</scope>
    <source>
        <strain>CDC 1551 / Oshkosh</strain>
    </source>
</reference>
<dbReference type="EMBL" id="AE000516">
    <property type="protein sequence ID" value="AAK45365.1"/>
    <property type="molecule type" value="Genomic_DNA"/>
</dbReference>
<dbReference type="PIR" id="D70894">
    <property type="entry name" value="D70894"/>
</dbReference>
<dbReference type="RefSeq" id="WP_003901991.1">
    <property type="nucleotide sequence ID" value="NZ_KK341227.1"/>
</dbReference>
<dbReference type="KEGG" id="mtc:MT1109"/>
<dbReference type="PATRIC" id="fig|83331.31.peg.1194"/>
<dbReference type="HOGENOM" id="CLU_053152_1_0_11"/>
<dbReference type="Proteomes" id="UP000001020">
    <property type="component" value="Chromosome"/>
</dbReference>
<dbReference type="GO" id="GO:0005886">
    <property type="term" value="C:plasma membrane"/>
    <property type="evidence" value="ECO:0007669"/>
    <property type="project" value="UniProtKB-SubCell"/>
</dbReference>
<dbReference type="InterPro" id="IPR051791">
    <property type="entry name" value="Pra-immunoreactive"/>
</dbReference>
<dbReference type="InterPro" id="IPR010432">
    <property type="entry name" value="RDD"/>
</dbReference>
<dbReference type="PANTHER" id="PTHR36115:SF6">
    <property type="entry name" value="PROLINE-RICH ANTIGEN HOMOLOG"/>
    <property type="match status" value="1"/>
</dbReference>
<dbReference type="PANTHER" id="PTHR36115">
    <property type="entry name" value="PROLINE-RICH ANTIGEN HOMOLOG-RELATED"/>
    <property type="match status" value="1"/>
</dbReference>
<dbReference type="Pfam" id="PF06271">
    <property type="entry name" value="RDD"/>
    <property type="match status" value="1"/>
</dbReference>
<name>PRA_MYCTO</name>
<gene>
    <name evidence="1" type="primary">pra</name>
    <name type="ordered locus">MT1109</name>
</gene>
<keyword id="KW-1003">Cell membrane</keyword>
<keyword id="KW-0472">Membrane</keyword>
<keyword id="KW-1185">Reference proteome</keyword>
<keyword id="KW-0677">Repeat</keyword>
<keyword id="KW-0812">Transmembrane</keyword>
<keyword id="KW-1133">Transmembrane helix</keyword>
<evidence type="ECO:0000250" key="1">
    <source>
        <dbReference type="UniProtKB" id="P41484"/>
    </source>
</evidence>
<evidence type="ECO:0000255" key="2"/>
<evidence type="ECO:0000256" key="3">
    <source>
        <dbReference type="SAM" id="MobiDB-lite"/>
    </source>
</evidence>
<evidence type="ECO:0000305" key="4"/>
<organism>
    <name type="scientific">Mycobacterium tuberculosis (strain CDC 1551 / Oshkosh)</name>
    <dbReference type="NCBI Taxonomy" id="83331"/>
    <lineage>
        <taxon>Bacteria</taxon>
        <taxon>Bacillati</taxon>
        <taxon>Actinomycetota</taxon>
        <taxon>Actinomycetes</taxon>
        <taxon>Mycobacteriales</taxon>
        <taxon>Mycobacteriaceae</taxon>
        <taxon>Mycobacterium</taxon>
        <taxon>Mycobacterium tuberculosis complex</taxon>
    </lineage>
</organism>
<comment type="subcellular location">
    <subcellularLocation>
        <location evidence="4">Cell membrane</location>
        <topology evidence="2">Multi-pass membrane protein</topology>
    </subcellularLocation>
</comment>
<comment type="similarity">
    <text evidence="4">Belongs to the mycobacterial Pra family.</text>
</comment>